<organism>
    <name type="scientific">Salvia miltiorrhiza</name>
    <name type="common">Chinese sage</name>
    <dbReference type="NCBI Taxonomy" id="226208"/>
    <lineage>
        <taxon>Eukaryota</taxon>
        <taxon>Viridiplantae</taxon>
        <taxon>Streptophyta</taxon>
        <taxon>Embryophyta</taxon>
        <taxon>Tracheophyta</taxon>
        <taxon>Spermatophyta</taxon>
        <taxon>Magnoliopsida</taxon>
        <taxon>eudicotyledons</taxon>
        <taxon>Gunneridae</taxon>
        <taxon>Pentapetalae</taxon>
        <taxon>asterids</taxon>
        <taxon>lamiids</taxon>
        <taxon>Lamiales</taxon>
        <taxon>Lamiaceae</taxon>
        <taxon>Nepetoideae</taxon>
        <taxon>Mentheae</taxon>
        <taxon>Salviinae</taxon>
        <taxon>Salvia</taxon>
        <taxon>Salvia incertae sedis</taxon>
    </lineage>
</organism>
<evidence type="ECO:0000250" key="1">
    <source>
        <dbReference type="UniProtKB" id="Q93ZB2"/>
    </source>
</evidence>
<evidence type="ECO:0000250" key="2">
    <source>
        <dbReference type="UniProtKB" id="Q96242"/>
    </source>
</evidence>
<evidence type="ECO:0000255" key="3"/>
<evidence type="ECO:0000269" key="4">
    <source>
    </source>
</evidence>
<evidence type="ECO:0000303" key="5">
    <source>
    </source>
</evidence>
<evidence type="ECO:0000303" key="6">
    <source>
    </source>
</evidence>
<evidence type="ECO:0000305" key="7"/>
<evidence type="ECO:0000305" key="8">
    <source>
    </source>
</evidence>
<feature type="chain" id="PRO_0000449937" description="Ent-kaurene oxidase">
    <location>
        <begin position="1"/>
        <end position="519"/>
    </location>
</feature>
<feature type="topological domain" description="Chloroplast intermembrane" evidence="7">
    <location>
        <begin position="1"/>
        <end position="10"/>
    </location>
</feature>
<feature type="transmembrane region" description="Helical" evidence="3">
    <location>
        <begin position="11"/>
        <end position="31"/>
    </location>
</feature>
<feature type="topological domain" description="Cytoplasmic" evidence="7">
    <location>
        <begin position="32"/>
        <end position="519"/>
    </location>
</feature>
<feature type="binding site" description="axial binding residue" evidence="2">
    <location>
        <position position="458"/>
    </location>
    <ligand>
        <name>heme</name>
        <dbReference type="ChEBI" id="CHEBI:30413"/>
    </ligand>
    <ligandPart>
        <name>Fe</name>
        <dbReference type="ChEBI" id="CHEBI:18248"/>
    </ligandPart>
</feature>
<feature type="sequence conflict" description="In Ref. 1; AJD25233." evidence="7" ref="1">
    <original>I</original>
    <variation>V</variation>
    <location>
        <position position="106"/>
    </location>
</feature>
<feature type="sequence conflict" description="In Ref. 1; AJD25233." evidence="7" ref="1">
    <original>R</original>
    <variation>Q</variation>
    <location>
        <position position="367"/>
    </location>
</feature>
<sequence>MDTLLSLQAVPAAAAIGGPVVAIGGITLFFIREYVKDQRKKSSSFPPPPKVPGLPVIGNLLQLKEKKPHKTFTKWSEKYGPIYSIRTGANTMIVLNTNDVAKEAMITKYSSISTRKLSKALTILTSDKSIVAMSDYNEFYKAAKRHLLTSTLGPTAQKRHRVHRNLMINNICDQFLAHAKMYPSEAVNFRKIFQSELFGLSMKQAIGEDVESIYVEDLDTTLSRQEMFKILVVDPMEGAIDVDWRDFFPYLKWIPNQHFENKIQQMHFHREAVMKALIEQQKKRIASGKAINCYLDHLLSEAADTLSEQQILMLLWEAIIEASDTTLVTTEWAMYELSKDPKRQNYLLSEIQNACGFDQLNEEKLCRLPYLAAIFQETLRKHSPVPVVPLRYVHEETQLGGYTIPEGSEIAINIYGCNMDKNVWDSPEEWRPERFVFGKDDTTELHKTMAFGGGKRVCAGALQAMTISCIAIGRLVQELEWRLGDGEEANVDTLGLTTHKLHPLQTIIKPRLRDRVCVS</sequence>
<proteinExistence type="evidence at protein level"/>
<dbReference type="EC" id="1.14.14.86" evidence="4"/>
<dbReference type="EMBL" id="KP337739">
    <property type="protein sequence ID" value="AJD25233.1"/>
    <property type="molecule type" value="mRNA"/>
</dbReference>
<dbReference type="EMBL" id="KJ606394">
    <property type="protein sequence ID" value="AJF93403.1"/>
    <property type="molecule type" value="mRNA"/>
</dbReference>
<dbReference type="SMR" id="A0A0G2RKY1"/>
<dbReference type="BRENDA" id="1.14.14.86">
    <property type="organism ID" value="9850"/>
</dbReference>
<dbReference type="UniPathway" id="UPA00390"/>
<dbReference type="GO" id="GO:0009707">
    <property type="term" value="C:chloroplast outer membrane"/>
    <property type="evidence" value="ECO:0007669"/>
    <property type="project" value="UniProtKB-SubCell"/>
</dbReference>
<dbReference type="GO" id="GO:0005783">
    <property type="term" value="C:endoplasmic reticulum"/>
    <property type="evidence" value="ECO:0007669"/>
    <property type="project" value="TreeGrafter"/>
</dbReference>
<dbReference type="GO" id="GO:0052615">
    <property type="term" value="F:ent-kaurene oxidase activity"/>
    <property type="evidence" value="ECO:0007669"/>
    <property type="project" value="UniProtKB-EC"/>
</dbReference>
<dbReference type="GO" id="GO:0020037">
    <property type="term" value="F:heme binding"/>
    <property type="evidence" value="ECO:0007669"/>
    <property type="project" value="InterPro"/>
</dbReference>
<dbReference type="GO" id="GO:0005506">
    <property type="term" value="F:iron ion binding"/>
    <property type="evidence" value="ECO:0007669"/>
    <property type="project" value="InterPro"/>
</dbReference>
<dbReference type="GO" id="GO:0016709">
    <property type="term" value="F:oxidoreductase activity, acting on paired donors, with incorporation or reduction of molecular oxygen, NAD(P)H as one donor, and incorporation of one atom of oxygen"/>
    <property type="evidence" value="ECO:0007669"/>
    <property type="project" value="TreeGrafter"/>
</dbReference>
<dbReference type="GO" id="GO:0010241">
    <property type="term" value="P:ent-kaurene oxidation to kaurenoic acid"/>
    <property type="evidence" value="ECO:0007669"/>
    <property type="project" value="InterPro"/>
</dbReference>
<dbReference type="GO" id="GO:0009686">
    <property type="term" value="P:gibberellin biosynthetic process"/>
    <property type="evidence" value="ECO:0007669"/>
    <property type="project" value="UniProtKB-UniPathway"/>
</dbReference>
<dbReference type="CDD" id="cd11075">
    <property type="entry name" value="CYP77_89"/>
    <property type="match status" value="1"/>
</dbReference>
<dbReference type="FunFam" id="1.10.630.10:FF:000062">
    <property type="entry name" value="Ent-kaurene oxidase 2"/>
    <property type="match status" value="1"/>
</dbReference>
<dbReference type="Gene3D" id="1.10.630.10">
    <property type="entry name" value="Cytochrome P450"/>
    <property type="match status" value="1"/>
</dbReference>
<dbReference type="InterPro" id="IPR001128">
    <property type="entry name" value="Cyt_P450"/>
</dbReference>
<dbReference type="InterPro" id="IPR017972">
    <property type="entry name" value="Cyt_P450_CS"/>
</dbReference>
<dbReference type="InterPro" id="IPR002401">
    <property type="entry name" value="Cyt_P450_E_grp-I"/>
</dbReference>
<dbReference type="InterPro" id="IPR036396">
    <property type="entry name" value="Cyt_P450_sf"/>
</dbReference>
<dbReference type="InterPro" id="IPR044225">
    <property type="entry name" value="KO_chloroplastic"/>
</dbReference>
<dbReference type="PANTHER" id="PTHR47283">
    <property type="entry name" value="ENT-KAURENE OXIDASE, CHLOROPLASTIC"/>
    <property type="match status" value="1"/>
</dbReference>
<dbReference type="PANTHER" id="PTHR47283:SF1">
    <property type="entry name" value="ENT-KAURENE OXIDASE, CHLOROPLASTIC"/>
    <property type="match status" value="1"/>
</dbReference>
<dbReference type="Pfam" id="PF00067">
    <property type="entry name" value="p450"/>
    <property type="match status" value="1"/>
</dbReference>
<dbReference type="PRINTS" id="PR00463">
    <property type="entry name" value="EP450I"/>
</dbReference>
<dbReference type="SUPFAM" id="SSF48264">
    <property type="entry name" value="Cytochrome P450"/>
    <property type="match status" value="1"/>
</dbReference>
<dbReference type="PROSITE" id="PS00086">
    <property type="entry name" value="CYTOCHROME_P450"/>
    <property type="match status" value="1"/>
</dbReference>
<comment type="function">
    <text evidence="4 8">Catalyzes three successive oxidations of the 4-methyl group of ent-kaurene giving kaurenoic acid, a key step in gibberellins (GAs) biosynthesis (PubMed:26971881). GAs, which are involved many processes, including stem elongation, play a central role in plant development (Probable).</text>
</comment>
<comment type="catalytic activity">
    <reaction evidence="4">
        <text>ent-kaur-16-ene + 3 reduced [NADPH--hemoprotein reductase] + 3 O2 = ent-kaur-16-en-19-oate + 3 oxidized [NADPH--hemoprotein reductase] + 4 H2O + 4 H(+)</text>
        <dbReference type="Rhea" id="RHEA:32323"/>
        <dbReference type="Rhea" id="RHEA-COMP:11964"/>
        <dbReference type="Rhea" id="RHEA-COMP:11965"/>
        <dbReference type="ChEBI" id="CHEBI:15377"/>
        <dbReference type="ChEBI" id="CHEBI:15378"/>
        <dbReference type="ChEBI" id="CHEBI:15379"/>
        <dbReference type="ChEBI" id="CHEBI:15415"/>
        <dbReference type="ChEBI" id="CHEBI:57297"/>
        <dbReference type="ChEBI" id="CHEBI:57618"/>
        <dbReference type="ChEBI" id="CHEBI:58210"/>
        <dbReference type="EC" id="1.14.14.86"/>
    </reaction>
    <physiologicalReaction direction="left-to-right" evidence="4">
        <dbReference type="Rhea" id="RHEA:32324"/>
    </physiologicalReaction>
</comment>
<comment type="cofactor">
    <cofactor evidence="2">
        <name>heme</name>
        <dbReference type="ChEBI" id="CHEBI:30413"/>
    </cofactor>
</comment>
<comment type="pathway">
    <text>Plant hormone biosynthesis; gibberellin biosynthesis.</text>
</comment>
<comment type="subcellular location">
    <subcellularLocation>
        <location evidence="1">Plastid</location>
        <location evidence="1">Chloroplast outer membrane</location>
        <topology evidence="3">Single-pass membrane protein</topology>
    </subcellularLocation>
</comment>
<comment type="similarity">
    <text evidence="7">Belongs to the cytochrome P450 family.</text>
</comment>
<reference key="1">
    <citation type="journal article" date="2014" name="PLoS ONE">
        <title>Computational identification and systematic classification of novel Cytochrome P450 genes in Salvia miltiorrhiza.</title>
        <authorList>
            <person name="Chen H."/>
            <person name="Wu B."/>
            <person name="Nelson D.R."/>
            <person name="Wu K."/>
            <person name="Liu C."/>
        </authorList>
    </citation>
    <scope>NUCLEOTIDE SEQUENCE [MRNA]</scope>
</reference>
<reference key="2">
    <citation type="journal article" date="2016" name="Sci. Rep.">
        <title>Functional characterization of ent-copalyl diphosphate synthase, kaurene synthase and kaurene oxidase in the Salvia miltiorrhiza gibberellin biosynthetic pathway.</title>
        <authorList>
            <person name="Su P."/>
            <person name="Tong Y."/>
            <person name="Cheng Q."/>
            <person name="Hu Y."/>
            <person name="Zhang M."/>
            <person name="Yang J."/>
            <person name="Teng Z."/>
            <person name="Gao W."/>
            <person name="Huang L."/>
        </authorList>
    </citation>
    <scope>NUCLEOTIDE SEQUENCE [MRNA]</scope>
    <scope>FUNCTION</scope>
    <scope>CATALYTIC ACTIVITY</scope>
</reference>
<accession>A0A0G2RKY1</accession>
<accession>A0A0B4VT08</accession>
<name>KO_SALMI</name>
<gene>
    <name evidence="6" type="primary">KO</name>
    <name evidence="5" type="synonym">CYP701A40</name>
</gene>
<protein>
    <recommendedName>
        <fullName evidence="6">Ent-kaurene oxidase</fullName>
        <shortName evidence="6">SmKO</shortName>
        <ecNumber evidence="4">1.14.14.86</ecNumber>
    </recommendedName>
    <alternativeName>
        <fullName evidence="5">Cytochrome P450 701A40</fullName>
    </alternativeName>
</protein>
<keyword id="KW-0150">Chloroplast</keyword>
<keyword id="KW-0349">Heme</keyword>
<keyword id="KW-0408">Iron</keyword>
<keyword id="KW-0472">Membrane</keyword>
<keyword id="KW-0479">Metal-binding</keyword>
<keyword id="KW-0503">Monooxygenase</keyword>
<keyword id="KW-0560">Oxidoreductase</keyword>
<keyword id="KW-0934">Plastid</keyword>
<keyword id="KW-1002">Plastid outer membrane</keyword>
<keyword id="KW-0812">Transmembrane</keyword>
<keyword id="KW-1133">Transmembrane helix</keyword>